<name>RL10_NITHX</name>
<proteinExistence type="inferred from homology"/>
<evidence type="ECO:0000255" key="1">
    <source>
        <dbReference type="HAMAP-Rule" id="MF_00362"/>
    </source>
</evidence>
<evidence type="ECO:0000305" key="2"/>
<comment type="function">
    <text evidence="1">Forms part of the ribosomal stalk, playing a central role in the interaction of the ribosome with GTP-bound translation factors.</text>
</comment>
<comment type="subunit">
    <text evidence="1">Part of the ribosomal stalk of the 50S ribosomal subunit. The N-terminus interacts with L11 and the large rRNA to form the base of the stalk. The C-terminus forms an elongated spine to which L12 dimers bind in a sequential fashion forming a multimeric L10(L12)X complex.</text>
</comment>
<comment type="similarity">
    <text evidence="1">Belongs to the universal ribosomal protein uL10 family.</text>
</comment>
<reference key="1">
    <citation type="submission" date="2006-03" db="EMBL/GenBank/DDBJ databases">
        <title>Complete sequence of chromosome of Nitrobacter hamburgensis X14.</title>
        <authorList>
            <consortium name="US DOE Joint Genome Institute"/>
            <person name="Copeland A."/>
            <person name="Lucas S."/>
            <person name="Lapidus A."/>
            <person name="Barry K."/>
            <person name="Detter J.C."/>
            <person name="Glavina del Rio T."/>
            <person name="Hammon N."/>
            <person name="Israni S."/>
            <person name="Dalin E."/>
            <person name="Tice H."/>
            <person name="Pitluck S."/>
            <person name="Chain P."/>
            <person name="Malfatti S."/>
            <person name="Shin M."/>
            <person name="Vergez L."/>
            <person name="Schmutz J."/>
            <person name="Larimer F."/>
            <person name="Land M."/>
            <person name="Hauser L."/>
            <person name="Kyrpides N."/>
            <person name="Ivanova N."/>
            <person name="Ward B."/>
            <person name="Arp D."/>
            <person name="Klotz M."/>
            <person name="Stein L."/>
            <person name="O'Mullan G."/>
            <person name="Starkenburg S."/>
            <person name="Sayavedra L."/>
            <person name="Poret-Peterson A.T."/>
            <person name="Gentry M.E."/>
            <person name="Bruce D."/>
            <person name="Richardson P."/>
        </authorList>
    </citation>
    <scope>NUCLEOTIDE SEQUENCE [LARGE SCALE GENOMIC DNA]</scope>
    <source>
        <strain>DSM 10229 / NCIMB 13809 / X14</strain>
    </source>
</reference>
<protein>
    <recommendedName>
        <fullName evidence="1">Large ribosomal subunit protein uL10</fullName>
    </recommendedName>
    <alternativeName>
        <fullName evidence="2">50S ribosomal protein L10</fullName>
    </alternativeName>
</protein>
<accession>Q1QN46</accession>
<organism>
    <name type="scientific">Nitrobacter hamburgensis (strain DSM 10229 / NCIMB 13809 / X14)</name>
    <dbReference type="NCBI Taxonomy" id="323097"/>
    <lineage>
        <taxon>Bacteria</taxon>
        <taxon>Pseudomonadati</taxon>
        <taxon>Pseudomonadota</taxon>
        <taxon>Alphaproteobacteria</taxon>
        <taxon>Hyphomicrobiales</taxon>
        <taxon>Nitrobacteraceae</taxon>
        <taxon>Nitrobacter</taxon>
    </lineage>
</organism>
<sequence>MERAAKKEAVEALNEVFKTTGVAVVAHYSGLTVAQMQKLRMQMKQAGASVKVSKNRLAKIALEGTDVVAIGSLLKGPTVIATSNDPVAAPKVAVEFAKTNESFVILGGSMGKTVLNVDSVKALASLPSLDELRGKLVGLLVAPATKIAQLSTAPAAKLARVVQAYASKSEAA</sequence>
<keyword id="KW-1185">Reference proteome</keyword>
<keyword id="KW-0687">Ribonucleoprotein</keyword>
<keyword id="KW-0689">Ribosomal protein</keyword>
<keyword id="KW-0694">RNA-binding</keyword>
<keyword id="KW-0699">rRNA-binding</keyword>
<gene>
    <name evidence="1" type="primary">rplJ</name>
    <name type="ordered locus">Nham_1529</name>
</gene>
<feature type="chain" id="PRO_1000005545" description="Large ribosomal subunit protein uL10">
    <location>
        <begin position="1"/>
        <end position="172"/>
    </location>
</feature>
<dbReference type="EMBL" id="CP000319">
    <property type="protein sequence ID" value="ABE62351.1"/>
    <property type="molecule type" value="Genomic_DNA"/>
</dbReference>
<dbReference type="RefSeq" id="WP_011510040.1">
    <property type="nucleotide sequence ID" value="NC_007964.1"/>
</dbReference>
<dbReference type="SMR" id="Q1QN46"/>
<dbReference type="STRING" id="323097.Nham_1529"/>
<dbReference type="KEGG" id="nha:Nham_1529"/>
<dbReference type="eggNOG" id="COG0244">
    <property type="taxonomic scope" value="Bacteria"/>
</dbReference>
<dbReference type="HOGENOM" id="CLU_092227_0_0_5"/>
<dbReference type="OrthoDB" id="9791972at2"/>
<dbReference type="Proteomes" id="UP000001953">
    <property type="component" value="Chromosome"/>
</dbReference>
<dbReference type="GO" id="GO:0015934">
    <property type="term" value="C:large ribosomal subunit"/>
    <property type="evidence" value="ECO:0007669"/>
    <property type="project" value="InterPro"/>
</dbReference>
<dbReference type="GO" id="GO:0070180">
    <property type="term" value="F:large ribosomal subunit rRNA binding"/>
    <property type="evidence" value="ECO:0007669"/>
    <property type="project" value="UniProtKB-UniRule"/>
</dbReference>
<dbReference type="GO" id="GO:0003735">
    <property type="term" value="F:structural constituent of ribosome"/>
    <property type="evidence" value="ECO:0007669"/>
    <property type="project" value="InterPro"/>
</dbReference>
<dbReference type="GO" id="GO:0006412">
    <property type="term" value="P:translation"/>
    <property type="evidence" value="ECO:0007669"/>
    <property type="project" value="UniProtKB-UniRule"/>
</dbReference>
<dbReference type="CDD" id="cd05797">
    <property type="entry name" value="Ribosomal_L10"/>
    <property type="match status" value="1"/>
</dbReference>
<dbReference type="Gene3D" id="3.30.70.1730">
    <property type="match status" value="1"/>
</dbReference>
<dbReference type="Gene3D" id="6.10.250.290">
    <property type="match status" value="1"/>
</dbReference>
<dbReference type="HAMAP" id="MF_00362">
    <property type="entry name" value="Ribosomal_uL10"/>
    <property type="match status" value="1"/>
</dbReference>
<dbReference type="InterPro" id="IPR001790">
    <property type="entry name" value="Ribosomal_uL10"/>
</dbReference>
<dbReference type="InterPro" id="IPR043141">
    <property type="entry name" value="Ribosomal_uL10-like_sf"/>
</dbReference>
<dbReference type="InterPro" id="IPR022973">
    <property type="entry name" value="Ribosomal_uL10_bac"/>
</dbReference>
<dbReference type="InterPro" id="IPR047865">
    <property type="entry name" value="Ribosomal_uL10_bac_type"/>
</dbReference>
<dbReference type="InterPro" id="IPR002363">
    <property type="entry name" value="Ribosomal_uL10_CS_bac"/>
</dbReference>
<dbReference type="NCBIfam" id="NF000955">
    <property type="entry name" value="PRK00099.1-1"/>
    <property type="match status" value="1"/>
</dbReference>
<dbReference type="PANTHER" id="PTHR11560">
    <property type="entry name" value="39S RIBOSOMAL PROTEIN L10, MITOCHONDRIAL"/>
    <property type="match status" value="1"/>
</dbReference>
<dbReference type="Pfam" id="PF00466">
    <property type="entry name" value="Ribosomal_L10"/>
    <property type="match status" value="1"/>
</dbReference>
<dbReference type="SUPFAM" id="SSF160369">
    <property type="entry name" value="Ribosomal protein L10-like"/>
    <property type="match status" value="1"/>
</dbReference>
<dbReference type="PROSITE" id="PS01109">
    <property type="entry name" value="RIBOSOMAL_L10"/>
    <property type="match status" value="1"/>
</dbReference>